<feature type="chain" id="PRO_0000177886" description="D-alanine--D-alanine ligase">
    <location>
        <begin position="1"/>
        <end position="349"/>
    </location>
</feature>
<feature type="domain" description="ATP-grasp" evidence="2">
    <location>
        <begin position="133"/>
        <end position="335"/>
    </location>
</feature>
<feature type="binding site" evidence="2">
    <location>
        <begin position="163"/>
        <end position="218"/>
    </location>
    <ligand>
        <name>ATP</name>
        <dbReference type="ChEBI" id="CHEBI:30616"/>
    </ligand>
</feature>
<feature type="binding site" evidence="2">
    <location>
        <position position="289"/>
    </location>
    <ligand>
        <name>Mg(2+)</name>
        <dbReference type="ChEBI" id="CHEBI:18420"/>
        <label>1</label>
    </ligand>
</feature>
<feature type="binding site" evidence="2">
    <location>
        <position position="302"/>
    </location>
    <ligand>
        <name>Mg(2+)</name>
        <dbReference type="ChEBI" id="CHEBI:18420"/>
        <label>1</label>
    </ligand>
</feature>
<feature type="binding site" evidence="2">
    <location>
        <position position="302"/>
    </location>
    <ligand>
        <name>Mg(2+)</name>
        <dbReference type="ChEBI" id="CHEBI:18420"/>
        <label>2</label>
    </ligand>
</feature>
<feature type="binding site" evidence="2">
    <location>
        <position position="304"/>
    </location>
    <ligand>
        <name>Mg(2+)</name>
        <dbReference type="ChEBI" id="CHEBI:18420"/>
        <label>2</label>
    </ligand>
</feature>
<feature type="sequence conflict" description="In Ref. 2; AAB41854." evidence="3" ref="2">
    <original>N</original>
    <variation>K</variation>
    <location>
        <position position="132"/>
    </location>
</feature>
<feature type="sequence conflict" description="In Ref. 2; AAB41854." evidence="3" ref="2">
    <original>D</original>
    <variation>V</variation>
    <location>
        <position position="238"/>
    </location>
</feature>
<feature type="sequence conflict" description="In Ref. 2; AAB41854." evidence="3" ref="2">
    <original>A</original>
    <variation>R</variation>
    <location>
        <position position="273"/>
    </location>
</feature>
<feature type="strand" evidence="4">
    <location>
        <begin position="4"/>
        <end position="11"/>
    </location>
</feature>
<feature type="helix" evidence="4">
    <location>
        <begin position="17"/>
        <end position="30"/>
    </location>
</feature>
<feature type="turn" evidence="4">
    <location>
        <begin position="33"/>
        <end position="35"/>
    </location>
</feature>
<feature type="strand" evidence="4">
    <location>
        <begin position="36"/>
        <end position="43"/>
    </location>
</feature>
<feature type="strand" evidence="4">
    <location>
        <begin position="49"/>
        <end position="57"/>
    </location>
</feature>
<feature type="helix" evidence="4">
    <location>
        <begin position="73"/>
        <end position="75"/>
    </location>
</feature>
<feature type="helix" evidence="4">
    <location>
        <begin position="79"/>
        <end position="82"/>
    </location>
</feature>
<feature type="strand" evidence="4">
    <location>
        <begin position="88"/>
        <end position="92"/>
    </location>
</feature>
<feature type="turn" evidence="4">
    <location>
        <begin position="96"/>
        <end position="98"/>
    </location>
</feature>
<feature type="strand" evidence="4">
    <location>
        <begin position="99"/>
        <end position="101"/>
    </location>
</feature>
<feature type="helix" evidence="4">
    <location>
        <begin position="102"/>
        <end position="109"/>
    </location>
</feature>
<feature type="strand" evidence="4">
    <location>
        <begin position="114"/>
        <end position="116"/>
    </location>
</feature>
<feature type="helix" evidence="4">
    <location>
        <begin position="119"/>
        <end position="126"/>
    </location>
</feature>
<feature type="helix" evidence="4">
    <location>
        <begin position="128"/>
        <end position="138"/>
    </location>
</feature>
<feature type="strand" evidence="4">
    <location>
        <begin position="146"/>
        <end position="150"/>
    </location>
</feature>
<feature type="helix" evidence="4">
    <location>
        <begin position="155"/>
        <end position="165"/>
    </location>
</feature>
<feature type="strand" evidence="4">
    <location>
        <begin position="168"/>
        <end position="174"/>
    </location>
</feature>
<feature type="strand" evidence="4">
    <location>
        <begin position="184"/>
        <end position="188"/>
    </location>
</feature>
<feature type="helix" evidence="4">
    <location>
        <begin position="189"/>
        <end position="202"/>
    </location>
</feature>
<feature type="strand" evidence="4">
    <location>
        <begin position="204"/>
        <end position="210"/>
    </location>
</feature>
<feature type="strand" evidence="4">
    <location>
        <begin position="214"/>
        <end position="226"/>
    </location>
</feature>
<feature type="strand" evidence="4">
    <location>
        <begin position="233"/>
        <end position="235"/>
    </location>
</feature>
<feature type="strand" evidence="4">
    <location>
        <begin position="255"/>
        <end position="258"/>
    </location>
</feature>
<feature type="helix" evidence="4">
    <location>
        <begin position="263"/>
        <end position="279"/>
    </location>
</feature>
<feature type="strand" evidence="4">
    <location>
        <begin position="284"/>
        <end position="292"/>
    </location>
</feature>
<feature type="strand" evidence="4">
    <location>
        <begin position="298"/>
        <end position="306"/>
    </location>
</feature>
<feature type="helix" evidence="4">
    <location>
        <begin position="314"/>
        <end position="321"/>
    </location>
</feature>
<feature type="helix" evidence="4">
    <location>
        <begin position="326"/>
        <end position="345"/>
    </location>
</feature>
<name>DDL_STRMU</name>
<organism>
    <name type="scientific">Streptococcus mutans serotype c (strain ATCC 700610 / UA159)</name>
    <dbReference type="NCBI Taxonomy" id="210007"/>
    <lineage>
        <taxon>Bacteria</taxon>
        <taxon>Bacillati</taxon>
        <taxon>Bacillota</taxon>
        <taxon>Bacilli</taxon>
        <taxon>Lactobacillales</taxon>
        <taxon>Streptococcaceae</taxon>
        <taxon>Streptococcus</taxon>
    </lineage>
</organism>
<evidence type="ECO:0000250" key="1"/>
<evidence type="ECO:0000255" key="2">
    <source>
        <dbReference type="HAMAP-Rule" id="MF_00047"/>
    </source>
</evidence>
<evidence type="ECO:0000305" key="3"/>
<evidence type="ECO:0007829" key="4">
    <source>
        <dbReference type="PDB" id="3K3P"/>
    </source>
</evidence>
<protein>
    <recommendedName>
        <fullName evidence="2">D-alanine--D-alanine ligase</fullName>
        <ecNumber evidence="2">6.3.2.4</ecNumber>
    </recommendedName>
    <alternativeName>
        <fullName evidence="2">D-Ala-D-Ala ligase</fullName>
    </alternativeName>
    <alternativeName>
        <fullName evidence="2">D-alanylalanine synthetase</fullName>
    </alternativeName>
</protein>
<dbReference type="EC" id="6.3.2.4" evidence="2"/>
<dbReference type="EMBL" id="AE014133">
    <property type="protein sequence ID" value="AAN58338.1"/>
    <property type="molecule type" value="Genomic_DNA"/>
</dbReference>
<dbReference type="EMBL" id="U69165">
    <property type="protein sequence ID" value="AAB41854.1"/>
    <property type="molecule type" value="Genomic_DNA"/>
</dbReference>
<dbReference type="RefSeq" id="NP_721032.1">
    <property type="nucleotide sequence ID" value="NC_004350.2"/>
</dbReference>
<dbReference type="RefSeq" id="WP_002352219.1">
    <property type="nucleotide sequence ID" value="NC_004350.2"/>
</dbReference>
<dbReference type="PDB" id="3K3P">
    <property type="method" value="X-ray"/>
    <property type="resolution" value="2.23 A"/>
    <property type="chains" value="A/B=1-349"/>
</dbReference>
<dbReference type="PDBsum" id="3K3P"/>
<dbReference type="SMR" id="P95803"/>
<dbReference type="STRING" id="210007.SMU_599"/>
<dbReference type="KEGG" id="smu:SMU_599"/>
<dbReference type="PATRIC" id="fig|210007.7.peg.532"/>
<dbReference type="eggNOG" id="COG1181">
    <property type="taxonomic scope" value="Bacteria"/>
</dbReference>
<dbReference type="HOGENOM" id="CLU_039268_0_0_9"/>
<dbReference type="OrthoDB" id="9813261at2"/>
<dbReference type="PhylomeDB" id="P95803"/>
<dbReference type="UniPathway" id="UPA00219"/>
<dbReference type="EvolutionaryTrace" id="P95803"/>
<dbReference type="Proteomes" id="UP000002512">
    <property type="component" value="Chromosome"/>
</dbReference>
<dbReference type="GO" id="GO:0005829">
    <property type="term" value="C:cytosol"/>
    <property type="evidence" value="ECO:0007669"/>
    <property type="project" value="TreeGrafter"/>
</dbReference>
<dbReference type="GO" id="GO:0005524">
    <property type="term" value="F:ATP binding"/>
    <property type="evidence" value="ECO:0007669"/>
    <property type="project" value="UniProtKB-KW"/>
</dbReference>
<dbReference type="GO" id="GO:0008716">
    <property type="term" value="F:D-alanine-D-alanine ligase activity"/>
    <property type="evidence" value="ECO:0007669"/>
    <property type="project" value="UniProtKB-UniRule"/>
</dbReference>
<dbReference type="GO" id="GO:0046872">
    <property type="term" value="F:metal ion binding"/>
    <property type="evidence" value="ECO:0007669"/>
    <property type="project" value="UniProtKB-KW"/>
</dbReference>
<dbReference type="GO" id="GO:0071555">
    <property type="term" value="P:cell wall organization"/>
    <property type="evidence" value="ECO:0007669"/>
    <property type="project" value="UniProtKB-KW"/>
</dbReference>
<dbReference type="GO" id="GO:0009252">
    <property type="term" value="P:peptidoglycan biosynthetic process"/>
    <property type="evidence" value="ECO:0007669"/>
    <property type="project" value="UniProtKB-UniRule"/>
</dbReference>
<dbReference type="GO" id="GO:0008360">
    <property type="term" value="P:regulation of cell shape"/>
    <property type="evidence" value="ECO:0007669"/>
    <property type="project" value="UniProtKB-KW"/>
</dbReference>
<dbReference type="FunFam" id="3.30.1490.20:FF:000007">
    <property type="entry name" value="D-alanine--D-alanine ligase"/>
    <property type="match status" value="1"/>
</dbReference>
<dbReference type="FunFam" id="3.30.470.20:FF:000008">
    <property type="entry name" value="D-alanine--D-alanine ligase"/>
    <property type="match status" value="1"/>
</dbReference>
<dbReference type="Gene3D" id="3.40.50.20">
    <property type="match status" value="1"/>
</dbReference>
<dbReference type="Gene3D" id="3.30.1490.20">
    <property type="entry name" value="ATP-grasp fold, A domain"/>
    <property type="match status" value="1"/>
</dbReference>
<dbReference type="Gene3D" id="3.30.470.20">
    <property type="entry name" value="ATP-grasp fold, B domain"/>
    <property type="match status" value="1"/>
</dbReference>
<dbReference type="HAMAP" id="MF_00047">
    <property type="entry name" value="Dala_Dala_lig"/>
    <property type="match status" value="1"/>
</dbReference>
<dbReference type="InterPro" id="IPR011761">
    <property type="entry name" value="ATP-grasp"/>
</dbReference>
<dbReference type="InterPro" id="IPR013815">
    <property type="entry name" value="ATP_grasp_subdomain_1"/>
</dbReference>
<dbReference type="InterPro" id="IPR000291">
    <property type="entry name" value="D-Ala_lig_Van_CS"/>
</dbReference>
<dbReference type="InterPro" id="IPR005905">
    <property type="entry name" value="D_ala_D_ala"/>
</dbReference>
<dbReference type="InterPro" id="IPR011095">
    <property type="entry name" value="Dala_Dala_lig_C"/>
</dbReference>
<dbReference type="InterPro" id="IPR011127">
    <property type="entry name" value="Dala_Dala_lig_N"/>
</dbReference>
<dbReference type="InterPro" id="IPR016185">
    <property type="entry name" value="PreATP-grasp_dom_sf"/>
</dbReference>
<dbReference type="NCBIfam" id="TIGR01205">
    <property type="entry name" value="D_ala_D_alaTIGR"/>
    <property type="match status" value="1"/>
</dbReference>
<dbReference type="NCBIfam" id="NF002528">
    <property type="entry name" value="PRK01966.1-4"/>
    <property type="match status" value="1"/>
</dbReference>
<dbReference type="NCBIfam" id="NF002529">
    <property type="entry name" value="PRK01966.1-5"/>
    <property type="match status" value="1"/>
</dbReference>
<dbReference type="PANTHER" id="PTHR23132">
    <property type="entry name" value="D-ALANINE--D-ALANINE LIGASE"/>
    <property type="match status" value="1"/>
</dbReference>
<dbReference type="PANTHER" id="PTHR23132:SF25">
    <property type="entry name" value="D-ALANINE--D-ALANINE LIGASE A"/>
    <property type="match status" value="1"/>
</dbReference>
<dbReference type="Pfam" id="PF07478">
    <property type="entry name" value="Dala_Dala_lig_C"/>
    <property type="match status" value="1"/>
</dbReference>
<dbReference type="Pfam" id="PF01820">
    <property type="entry name" value="Dala_Dala_lig_N"/>
    <property type="match status" value="1"/>
</dbReference>
<dbReference type="PIRSF" id="PIRSF039102">
    <property type="entry name" value="Ddl/VanB"/>
    <property type="match status" value="1"/>
</dbReference>
<dbReference type="SUPFAM" id="SSF56059">
    <property type="entry name" value="Glutathione synthetase ATP-binding domain-like"/>
    <property type="match status" value="1"/>
</dbReference>
<dbReference type="SUPFAM" id="SSF52440">
    <property type="entry name" value="PreATP-grasp domain"/>
    <property type="match status" value="1"/>
</dbReference>
<dbReference type="PROSITE" id="PS50975">
    <property type="entry name" value="ATP_GRASP"/>
    <property type="match status" value="1"/>
</dbReference>
<dbReference type="PROSITE" id="PS00843">
    <property type="entry name" value="DALA_DALA_LIGASE_1"/>
    <property type="match status" value="1"/>
</dbReference>
<dbReference type="PROSITE" id="PS00844">
    <property type="entry name" value="DALA_DALA_LIGASE_2"/>
    <property type="match status" value="1"/>
</dbReference>
<comment type="function">
    <text evidence="2">Cell wall formation.</text>
</comment>
<comment type="catalytic activity">
    <reaction evidence="2">
        <text>2 D-alanine + ATP = D-alanyl-D-alanine + ADP + phosphate + H(+)</text>
        <dbReference type="Rhea" id="RHEA:11224"/>
        <dbReference type="ChEBI" id="CHEBI:15378"/>
        <dbReference type="ChEBI" id="CHEBI:30616"/>
        <dbReference type="ChEBI" id="CHEBI:43474"/>
        <dbReference type="ChEBI" id="CHEBI:57416"/>
        <dbReference type="ChEBI" id="CHEBI:57822"/>
        <dbReference type="ChEBI" id="CHEBI:456216"/>
        <dbReference type="EC" id="6.3.2.4"/>
    </reaction>
</comment>
<comment type="cofactor">
    <cofactor evidence="1">
        <name>Mg(2+)</name>
        <dbReference type="ChEBI" id="CHEBI:18420"/>
    </cofactor>
    <cofactor evidence="1">
        <name>Mn(2+)</name>
        <dbReference type="ChEBI" id="CHEBI:29035"/>
    </cofactor>
    <text evidence="1">Binds 2 magnesium or manganese ions per subunit.</text>
</comment>
<comment type="pathway">
    <text evidence="2">Cell wall biogenesis; peptidoglycan biosynthesis.</text>
</comment>
<comment type="subcellular location">
    <subcellularLocation>
        <location evidence="2">Cytoplasm</location>
    </subcellularLocation>
</comment>
<comment type="similarity">
    <text evidence="2">Belongs to the D-alanine--D-alanine ligase family.</text>
</comment>
<gene>
    <name evidence="2" type="primary">ddl</name>
    <name type="ordered locus">SMU_599</name>
</gene>
<proteinExistence type="evidence at protein level"/>
<accession>P95803</accession>
<sequence>MSKETLVLLYGGRSAERDVSVLSAESVMRAINYDNFLVKTYFITQAGDFIKTQEFDSQPSETDKLMTNDTIIASQKIKPSDIYEEEAVVFPVLHGPMGEDGSIQGFLEVLKMPYVGTNILSSSVAMDKITTNQVLESATTIPQVAYVALIEGEPLESKLAEVEEKLIYPVFVKPANMGSSVGISKAENRTDLKQAIALALKYDSRVLIEQGVDAREIEVGILGNTDVKTTLPGEIVKDVAFYDYEAKYIDNKITMAIPAEIDPVIVEKMRDYAATAFRTLGCCGLSRCDFFLTEDGKVYLNELNTMPGFTQWSMYPLLWENMGLSYSVLIEELVSLAKEMFDKRESHLV</sequence>
<reference key="1">
    <citation type="journal article" date="2002" name="Proc. Natl. Acad. Sci. U.S.A.">
        <title>Genome sequence of Streptococcus mutans UA159, a cariogenic dental pathogen.</title>
        <authorList>
            <person name="Ajdic D.J."/>
            <person name="McShan W.M."/>
            <person name="McLaughlin R.E."/>
            <person name="Savic G."/>
            <person name="Chang J."/>
            <person name="Carson M.B."/>
            <person name="Primeaux C."/>
            <person name="Tian R."/>
            <person name="Kenton S."/>
            <person name="Jia H.G."/>
            <person name="Lin S.P."/>
            <person name="Qian Y."/>
            <person name="Li S."/>
            <person name="Zhu H."/>
            <person name="Najar F.Z."/>
            <person name="Lai H."/>
            <person name="White J."/>
            <person name="Roe B.A."/>
            <person name="Ferretti J.J."/>
        </authorList>
    </citation>
    <scope>NUCLEOTIDE SEQUENCE [LARGE SCALE GENOMIC DNA]</scope>
    <source>
        <strain>ATCC 700610 / UA159</strain>
    </source>
</reference>
<reference key="2">
    <citation type="submission" date="1997-02" db="EMBL/GenBank/DDBJ databases">
        <authorList>
            <person name="Garnier F."/>
            <person name="Gerbaud G."/>
            <person name="Courvalin P."/>
            <person name="Galimand M."/>
        </authorList>
    </citation>
    <scope>NUCLEOTIDE SEQUENCE [GENOMIC DNA] OF 106-303</scope>
    <source>
        <strain>ATCC 25175 / DSM 20523 / JCM 5705 / NBRC 13955 / NCIMB 702062 / NCTC 10449</strain>
    </source>
</reference>
<keyword id="KW-0002">3D-structure</keyword>
<keyword id="KW-0067">ATP-binding</keyword>
<keyword id="KW-0133">Cell shape</keyword>
<keyword id="KW-0961">Cell wall biogenesis/degradation</keyword>
<keyword id="KW-0963">Cytoplasm</keyword>
<keyword id="KW-0436">Ligase</keyword>
<keyword id="KW-0460">Magnesium</keyword>
<keyword id="KW-0464">Manganese</keyword>
<keyword id="KW-0479">Metal-binding</keyword>
<keyword id="KW-0547">Nucleotide-binding</keyword>
<keyword id="KW-0573">Peptidoglycan synthesis</keyword>
<keyword id="KW-1185">Reference proteome</keyword>